<keyword id="KW-0002">3D-structure</keyword>
<keyword id="KW-0025">Alternative splicing</keyword>
<keyword id="KW-1015">Disulfide bond</keyword>
<keyword id="KW-0256">Endoplasmic reticulum</keyword>
<keyword id="KW-0325">Glycoprotein</keyword>
<keyword id="KW-0472">Membrane</keyword>
<keyword id="KW-0914">Notch signaling pathway</keyword>
<keyword id="KW-0597">Phosphoprotein</keyword>
<keyword id="KW-1185">Reference proteome</keyword>
<keyword id="KW-0677">Repeat</keyword>
<keyword id="KW-0732">Signal</keyword>
<keyword id="KW-0812">Transmembrane</keyword>
<keyword id="KW-1133">Transmembrane helix</keyword>
<dbReference type="EMBL" id="AF063095">
    <property type="protein sequence ID" value="AAD05210.1"/>
    <property type="molecule type" value="mRNA"/>
</dbReference>
<dbReference type="EMBL" id="AK005023">
    <property type="protein sequence ID" value="BAB23750.1"/>
    <property type="molecule type" value="mRNA"/>
</dbReference>
<dbReference type="CCDS" id="CCDS26091.1">
    <molecule id="Q9Z2G6-1"/>
</dbReference>
<dbReference type="CCDS" id="CCDS49137.1">
    <molecule id="Q9Z2G6-2"/>
</dbReference>
<dbReference type="RefSeq" id="NP_001034178.1">
    <molecule id="Q9Z2G6-1"/>
    <property type="nucleotide sequence ID" value="NM_001039089.1"/>
</dbReference>
<dbReference type="RefSeq" id="NP_035474.1">
    <molecule id="Q9Z2G6-2"/>
    <property type="nucleotide sequence ID" value="NM_011344.2"/>
</dbReference>
<dbReference type="PDB" id="5B26">
    <property type="method" value="X-ray"/>
    <property type="resolution" value="2.60 A"/>
    <property type="chains" value="A/B/C/D=348-533"/>
</dbReference>
<dbReference type="PDBsum" id="5B26"/>
<dbReference type="SMR" id="Q9Z2G6"/>
<dbReference type="BioGRID" id="203153">
    <property type="interactions" value="11"/>
</dbReference>
<dbReference type="DIP" id="DIP-61846N"/>
<dbReference type="FunCoup" id="Q9Z2G6">
    <property type="interactions" value="1851"/>
</dbReference>
<dbReference type="IntAct" id="Q9Z2G6">
    <property type="interactions" value="6"/>
</dbReference>
<dbReference type="STRING" id="10090.ENSMUSP00000021347"/>
<dbReference type="GlyConnect" id="2642">
    <property type="glycosylation" value="5 N-Linked glycans (3 sites)"/>
</dbReference>
<dbReference type="GlyCosmos" id="Q9Z2G6">
    <property type="glycosylation" value="5 sites, 5 glycans"/>
</dbReference>
<dbReference type="GlyGen" id="Q9Z2G6">
    <property type="glycosylation" value="8 sites, 8 N-linked glycans (5 sites), 1 O-linked glycan (3 sites)"/>
</dbReference>
<dbReference type="iPTMnet" id="Q9Z2G6"/>
<dbReference type="PhosphoSitePlus" id="Q9Z2G6"/>
<dbReference type="jPOST" id="Q9Z2G6"/>
<dbReference type="PaxDb" id="10090-ENSMUSP00000021347"/>
<dbReference type="ProteomicsDB" id="261142">
    <molecule id="Q9Z2G6-1"/>
</dbReference>
<dbReference type="ProteomicsDB" id="261143">
    <molecule id="Q9Z2G6-2"/>
</dbReference>
<dbReference type="Pumba" id="Q9Z2G6"/>
<dbReference type="Antibodypedia" id="13274">
    <property type="antibodies" value="263 antibodies from 30 providers"/>
</dbReference>
<dbReference type="Ensembl" id="ENSMUST00000021347.12">
    <molecule id="Q9Z2G6-1"/>
    <property type="protein sequence ID" value="ENSMUSP00000021347.6"/>
    <property type="gene ID" value="ENSMUSG00000020964.16"/>
</dbReference>
<dbReference type="Ensembl" id="ENSMUST00000167466.2">
    <molecule id="Q9Z2G6-2"/>
    <property type="protein sequence ID" value="ENSMUSP00000129384.2"/>
    <property type="gene ID" value="ENSMUSG00000020964.16"/>
</dbReference>
<dbReference type="GeneID" id="20338"/>
<dbReference type="KEGG" id="mmu:20338"/>
<dbReference type="UCSC" id="uc007oky.1">
    <molecule id="Q9Z2G6-1"/>
    <property type="organism name" value="mouse"/>
</dbReference>
<dbReference type="AGR" id="MGI:1329016"/>
<dbReference type="CTD" id="6400"/>
<dbReference type="MGI" id="MGI:1329016">
    <property type="gene designation" value="Sel1l"/>
</dbReference>
<dbReference type="VEuPathDB" id="HostDB:ENSMUSG00000020964"/>
<dbReference type="eggNOG" id="KOG1550">
    <property type="taxonomic scope" value="Eukaryota"/>
</dbReference>
<dbReference type="GeneTree" id="ENSGT00940000156671"/>
<dbReference type="HOGENOM" id="CLU_007931_2_1_1"/>
<dbReference type="InParanoid" id="Q9Z2G6"/>
<dbReference type="OMA" id="LLGHWMD"/>
<dbReference type="OrthoDB" id="27934at2759"/>
<dbReference type="PhylomeDB" id="Q9Z2G6"/>
<dbReference type="TreeFam" id="TF315257"/>
<dbReference type="Reactome" id="R-MMU-382556">
    <property type="pathway name" value="ABC-family proteins mediated transport"/>
</dbReference>
<dbReference type="Reactome" id="R-MMU-5358346">
    <property type="pathway name" value="Hedgehog ligand biogenesis"/>
</dbReference>
<dbReference type="BioGRID-ORCS" id="20338">
    <property type="hits" value="16 hits in 78 CRISPR screens"/>
</dbReference>
<dbReference type="ChiTaRS" id="Sel1l">
    <property type="organism name" value="mouse"/>
</dbReference>
<dbReference type="EvolutionaryTrace" id="Q9Z2G6"/>
<dbReference type="PRO" id="PR:Q9Z2G6"/>
<dbReference type="Proteomes" id="UP000000589">
    <property type="component" value="Chromosome 12"/>
</dbReference>
<dbReference type="RNAct" id="Q9Z2G6">
    <property type="molecule type" value="protein"/>
</dbReference>
<dbReference type="Bgee" id="ENSMUSG00000020964">
    <property type="expression patterns" value="Expressed in submandibular gland and 265 other cell types or tissues"/>
</dbReference>
<dbReference type="ExpressionAtlas" id="Q9Z2G6">
    <property type="expression patterns" value="baseline and differential"/>
</dbReference>
<dbReference type="GO" id="GO:0036513">
    <property type="term" value="C:Derlin-1 retrotranslocation complex"/>
    <property type="evidence" value="ECO:0007669"/>
    <property type="project" value="Ensembl"/>
</dbReference>
<dbReference type="GO" id="GO:0005783">
    <property type="term" value="C:endoplasmic reticulum"/>
    <property type="evidence" value="ECO:0000250"/>
    <property type="project" value="UniProtKB"/>
</dbReference>
<dbReference type="GO" id="GO:0000839">
    <property type="term" value="C:Hrd1p ubiquitin ligase ERAD-L complex"/>
    <property type="evidence" value="ECO:0000250"/>
    <property type="project" value="UniProtKB"/>
</dbReference>
<dbReference type="GO" id="GO:0036503">
    <property type="term" value="P:ERAD pathway"/>
    <property type="evidence" value="ECO:0000315"/>
    <property type="project" value="UniProtKB"/>
</dbReference>
<dbReference type="GO" id="GO:0007219">
    <property type="term" value="P:Notch signaling pathway"/>
    <property type="evidence" value="ECO:0007669"/>
    <property type="project" value="UniProtKB-KW"/>
</dbReference>
<dbReference type="GO" id="GO:0009306">
    <property type="term" value="P:protein secretion"/>
    <property type="evidence" value="ECO:0000315"/>
    <property type="project" value="UniProtKB"/>
</dbReference>
<dbReference type="GO" id="GO:0034976">
    <property type="term" value="P:response to endoplasmic reticulum stress"/>
    <property type="evidence" value="ECO:0000315"/>
    <property type="project" value="MGI"/>
</dbReference>
<dbReference type="GO" id="GO:0030970">
    <property type="term" value="P:retrograde protein transport, ER to cytosol"/>
    <property type="evidence" value="ECO:0007669"/>
    <property type="project" value="Ensembl"/>
</dbReference>
<dbReference type="GO" id="GO:0006641">
    <property type="term" value="P:triglyceride metabolic process"/>
    <property type="evidence" value="ECO:0000315"/>
    <property type="project" value="UniProtKB"/>
</dbReference>
<dbReference type="CDD" id="cd00062">
    <property type="entry name" value="FN2"/>
    <property type="match status" value="1"/>
</dbReference>
<dbReference type="FunFam" id="2.10.10.10:FF:000001">
    <property type="entry name" value="Fibronectin 1a isoform 1"/>
    <property type="match status" value="1"/>
</dbReference>
<dbReference type="FunFam" id="1.25.40.10:FF:000208">
    <property type="entry name" value="Protein sel-1 homolog 1"/>
    <property type="match status" value="1"/>
</dbReference>
<dbReference type="FunFam" id="1.25.40.10:FF:000193">
    <property type="entry name" value="protein sel-1 homolog 1 isoform X1"/>
    <property type="match status" value="1"/>
</dbReference>
<dbReference type="FunFam" id="1.25.40.10:FF:000200">
    <property type="entry name" value="protein sel-1 homolog 1 precursor"/>
    <property type="match status" value="1"/>
</dbReference>
<dbReference type="Gene3D" id="2.10.10.10">
    <property type="entry name" value="Fibronectin, type II, collagen-binding"/>
    <property type="match status" value="1"/>
</dbReference>
<dbReference type="Gene3D" id="1.25.40.10">
    <property type="entry name" value="Tetratricopeptide repeat domain"/>
    <property type="match status" value="3"/>
</dbReference>
<dbReference type="InterPro" id="IPR000562">
    <property type="entry name" value="FN_type2_dom"/>
</dbReference>
<dbReference type="InterPro" id="IPR036943">
    <property type="entry name" value="FN_type2_sf"/>
</dbReference>
<dbReference type="InterPro" id="IPR013806">
    <property type="entry name" value="Kringle-like"/>
</dbReference>
<dbReference type="InterPro" id="IPR006597">
    <property type="entry name" value="Sel1-like"/>
</dbReference>
<dbReference type="InterPro" id="IPR050767">
    <property type="entry name" value="Sel1_AlgK"/>
</dbReference>
<dbReference type="InterPro" id="IPR011990">
    <property type="entry name" value="TPR-like_helical_dom_sf"/>
</dbReference>
<dbReference type="PANTHER" id="PTHR11102:SF70">
    <property type="entry name" value="PROTEIN SEL-1 HOMOLOG 1"/>
    <property type="match status" value="1"/>
</dbReference>
<dbReference type="PANTHER" id="PTHR11102">
    <property type="entry name" value="SEL-1-LIKE PROTEIN"/>
    <property type="match status" value="1"/>
</dbReference>
<dbReference type="Pfam" id="PF00040">
    <property type="entry name" value="fn2"/>
    <property type="match status" value="1"/>
</dbReference>
<dbReference type="Pfam" id="PF08238">
    <property type="entry name" value="Sel1"/>
    <property type="match status" value="11"/>
</dbReference>
<dbReference type="PRINTS" id="PR00013">
    <property type="entry name" value="FNTYPEII"/>
</dbReference>
<dbReference type="SMART" id="SM00059">
    <property type="entry name" value="FN2"/>
    <property type="match status" value="1"/>
</dbReference>
<dbReference type="SMART" id="SM00671">
    <property type="entry name" value="SEL1"/>
    <property type="match status" value="11"/>
</dbReference>
<dbReference type="SUPFAM" id="SSF81901">
    <property type="entry name" value="HCP-like"/>
    <property type="match status" value="3"/>
</dbReference>
<dbReference type="SUPFAM" id="SSF57440">
    <property type="entry name" value="Kringle-like"/>
    <property type="match status" value="1"/>
</dbReference>
<dbReference type="PROSITE" id="PS00023">
    <property type="entry name" value="FN2_1"/>
    <property type="match status" value="1"/>
</dbReference>
<dbReference type="PROSITE" id="PS51092">
    <property type="entry name" value="FN2_2"/>
    <property type="match status" value="1"/>
</dbReference>
<gene>
    <name type="primary">Sel1l</name>
    <name type="synonym">Sel1h</name>
</gene>
<evidence type="ECO:0000250" key="1"/>
<evidence type="ECO:0000250" key="2">
    <source>
        <dbReference type="UniProtKB" id="Q9UBV2"/>
    </source>
</evidence>
<evidence type="ECO:0000255" key="3"/>
<evidence type="ECO:0000255" key="4">
    <source>
        <dbReference type="PROSITE-ProRule" id="PRU00479"/>
    </source>
</evidence>
<evidence type="ECO:0000256" key="5">
    <source>
        <dbReference type="SAM" id="MobiDB-lite"/>
    </source>
</evidence>
<evidence type="ECO:0000269" key="6">
    <source>
    </source>
</evidence>
<evidence type="ECO:0000269" key="7">
    <source>
    </source>
</evidence>
<evidence type="ECO:0000269" key="8">
    <source>
    </source>
</evidence>
<evidence type="ECO:0000269" key="9">
    <source>
    </source>
</evidence>
<evidence type="ECO:0000269" key="10">
    <source>
    </source>
</evidence>
<evidence type="ECO:0000303" key="11">
    <source>
    </source>
</evidence>
<evidence type="ECO:0000305" key="12"/>
<evidence type="ECO:0007744" key="13">
    <source>
        <dbReference type="PDB" id="5B26"/>
    </source>
</evidence>
<evidence type="ECO:0007829" key="14">
    <source>
        <dbReference type="PDB" id="5B26"/>
    </source>
</evidence>
<protein>
    <recommendedName>
        <fullName>Protein sel-1 homolog 1</fullName>
    </recommendedName>
    <alternativeName>
        <fullName>Suppressor of lin-12-like protein 1</fullName>
        <shortName>Sel-1L</shortName>
    </alternativeName>
</protein>
<organism>
    <name type="scientific">Mus musculus</name>
    <name type="common">Mouse</name>
    <dbReference type="NCBI Taxonomy" id="10090"/>
    <lineage>
        <taxon>Eukaryota</taxon>
        <taxon>Metazoa</taxon>
        <taxon>Chordata</taxon>
        <taxon>Craniata</taxon>
        <taxon>Vertebrata</taxon>
        <taxon>Euteleostomi</taxon>
        <taxon>Mammalia</taxon>
        <taxon>Eutheria</taxon>
        <taxon>Euarchontoglires</taxon>
        <taxon>Glires</taxon>
        <taxon>Rodentia</taxon>
        <taxon>Myomorpha</taxon>
        <taxon>Muroidea</taxon>
        <taxon>Muridae</taxon>
        <taxon>Murinae</taxon>
        <taxon>Mus</taxon>
        <taxon>Mus</taxon>
    </lineage>
</organism>
<reference key="1">
    <citation type="journal article" date="1998" name="Mech. Dev.">
        <title>Cloning and characterization of Sel-1l, a murine homolog of the C. elegans sel-1 gene.</title>
        <authorList>
            <person name="Donoviel D.B."/>
            <person name="Donoviel M.S."/>
            <person name="Fan E."/>
            <person name="Hadjantonakis A.-K."/>
            <person name="Bernstein A."/>
        </authorList>
    </citation>
    <scope>NUCLEOTIDE SEQUENCE [MRNA] (ISOFORM 2)</scope>
    <scope>TISSUE SPECIFICITY</scope>
</reference>
<reference key="2">
    <citation type="journal article" date="2005" name="Science">
        <title>The transcriptional landscape of the mammalian genome.</title>
        <authorList>
            <person name="Carninci P."/>
            <person name="Kasukawa T."/>
            <person name="Katayama S."/>
            <person name="Gough J."/>
            <person name="Frith M.C."/>
            <person name="Maeda N."/>
            <person name="Oyama R."/>
            <person name="Ravasi T."/>
            <person name="Lenhard B."/>
            <person name="Wells C."/>
            <person name="Kodzius R."/>
            <person name="Shimokawa K."/>
            <person name="Bajic V.B."/>
            <person name="Brenner S.E."/>
            <person name="Batalov S."/>
            <person name="Forrest A.R."/>
            <person name="Zavolan M."/>
            <person name="Davis M.J."/>
            <person name="Wilming L.G."/>
            <person name="Aidinis V."/>
            <person name="Allen J.E."/>
            <person name="Ambesi-Impiombato A."/>
            <person name="Apweiler R."/>
            <person name="Aturaliya R.N."/>
            <person name="Bailey T.L."/>
            <person name="Bansal M."/>
            <person name="Baxter L."/>
            <person name="Beisel K.W."/>
            <person name="Bersano T."/>
            <person name="Bono H."/>
            <person name="Chalk A.M."/>
            <person name="Chiu K.P."/>
            <person name="Choudhary V."/>
            <person name="Christoffels A."/>
            <person name="Clutterbuck D.R."/>
            <person name="Crowe M.L."/>
            <person name="Dalla E."/>
            <person name="Dalrymple B.P."/>
            <person name="de Bono B."/>
            <person name="Della Gatta G."/>
            <person name="di Bernardo D."/>
            <person name="Down T."/>
            <person name="Engstrom P."/>
            <person name="Fagiolini M."/>
            <person name="Faulkner G."/>
            <person name="Fletcher C.F."/>
            <person name="Fukushima T."/>
            <person name="Furuno M."/>
            <person name="Futaki S."/>
            <person name="Gariboldi M."/>
            <person name="Georgii-Hemming P."/>
            <person name="Gingeras T.R."/>
            <person name="Gojobori T."/>
            <person name="Green R.E."/>
            <person name="Gustincich S."/>
            <person name="Harbers M."/>
            <person name="Hayashi Y."/>
            <person name="Hensch T.K."/>
            <person name="Hirokawa N."/>
            <person name="Hill D."/>
            <person name="Huminiecki L."/>
            <person name="Iacono M."/>
            <person name="Ikeo K."/>
            <person name="Iwama A."/>
            <person name="Ishikawa T."/>
            <person name="Jakt M."/>
            <person name="Kanapin A."/>
            <person name="Katoh M."/>
            <person name="Kawasawa Y."/>
            <person name="Kelso J."/>
            <person name="Kitamura H."/>
            <person name="Kitano H."/>
            <person name="Kollias G."/>
            <person name="Krishnan S.P."/>
            <person name="Kruger A."/>
            <person name="Kummerfeld S.K."/>
            <person name="Kurochkin I.V."/>
            <person name="Lareau L.F."/>
            <person name="Lazarevic D."/>
            <person name="Lipovich L."/>
            <person name="Liu J."/>
            <person name="Liuni S."/>
            <person name="McWilliam S."/>
            <person name="Madan Babu M."/>
            <person name="Madera M."/>
            <person name="Marchionni L."/>
            <person name="Matsuda H."/>
            <person name="Matsuzawa S."/>
            <person name="Miki H."/>
            <person name="Mignone F."/>
            <person name="Miyake S."/>
            <person name="Morris K."/>
            <person name="Mottagui-Tabar S."/>
            <person name="Mulder N."/>
            <person name="Nakano N."/>
            <person name="Nakauchi H."/>
            <person name="Ng P."/>
            <person name="Nilsson R."/>
            <person name="Nishiguchi S."/>
            <person name="Nishikawa S."/>
            <person name="Nori F."/>
            <person name="Ohara O."/>
            <person name="Okazaki Y."/>
            <person name="Orlando V."/>
            <person name="Pang K.C."/>
            <person name="Pavan W.J."/>
            <person name="Pavesi G."/>
            <person name="Pesole G."/>
            <person name="Petrovsky N."/>
            <person name="Piazza S."/>
            <person name="Reed J."/>
            <person name="Reid J.F."/>
            <person name="Ring B.Z."/>
            <person name="Ringwald M."/>
            <person name="Rost B."/>
            <person name="Ruan Y."/>
            <person name="Salzberg S.L."/>
            <person name="Sandelin A."/>
            <person name="Schneider C."/>
            <person name="Schoenbach C."/>
            <person name="Sekiguchi K."/>
            <person name="Semple C.A."/>
            <person name="Seno S."/>
            <person name="Sessa L."/>
            <person name="Sheng Y."/>
            <person name="Shibata Y."/>
            <person name="Shimada H."/>
            <person name="Shimada K."/>
            <person name="Silva D."/>
            <person name="Sinclair B."/>
            <person name="Sperling S."/>
            <person name="Stupka E."/>
            <person name="Sugiura K."/>
            <person name="Sultana R."/>
            <person name="Takenaka Y."/>
            <person name="Taki K."/>
            <person name="Tammoja K."/>
            <person name="Tan S.L."/>
            <person name="Tang S."/>
            <person name="Taylor M.S."/>
            <person name="Tegner J."/>
            <person name="Teichmann S.A."/>
            <person name="Ueda H.R."/>
            <person name="van Nimwegen E."/>
            <person name="Verardo R."/>
            <person name="Wei C.L."/>
            <person name="Yagi K."/>
            <person name="Yamanishi H."/>
            <person name="Zabarovsky E."/>
            <person name="Zhu S."/>
            <person name="Zimmer A."/>
            <person name="Hide W."/>
            <person name="Bult C."/>
            <person name="Grimmond S.M."/>
            <person name="Teasdale R.D."/>
            <person name="Liu E.T."/>
            <person name="Brusic V."/>
            <person name="Quackenbush J."/>
            <person name="Wahlestedt C."/>
            <person name="Mattick J.S."/>
            <person name="Hume D.A."/>
            <person name="Kai C."/>
            <person name="Sasaki D."/>
            <person name="Tomaru Y."/>
            <person name="Fukuda S."/>
            <person name="Kanamori-Katayama M."/>
            <person name="Suzuki M."/>
            <person name="Aoki J."/>
            <person name="Arakawa T."/>
            <person name="Iida J."/>
            <person name="Imamura K."/>
            <person name="Itoh M."/>
            <person name="Kato T."/>
            <person name="Kawaji H."/>
            <person name="Kawagashira N."/>
            <person name="Kawashima T."/>
            <person name="Kojima M."/>
            <person name="Kondo S."/>
            <person name="Konno H."/>
            <person name="Nakano K."/>
            <person name="Ninomiya N."/>
            <person name="Nishio T."/>
            <person name="Okada M."/>
            <person name="Plessy C."/>
            <person name="Shibata K."/>
            <person name="Shiraki T."/>
            <person name="Suzuki S."/>
            <person name="Tagami M."/>
            <person name="Waki K."/>
            <person name="Watahiki A."/>
            <person name="Okamura-Oho Y."/>
            <person name="Suzuki H."/>
            <person name="Kawai J."/>
            <person name="Hayashizaki Y."/>
        </authorList>
    </citation>
    <scope>NUCLEOTIDE SEQUENCE [LARGE SCALE MRNA] (ISOFORM 1)</scope>
    <source>
        <strain>C57BL/6J</strain>
        <tissue>Liver</tissue>
    </source>
</reference>
<reference key="3">
    <citation type="journal article" date="2010" name="BMC Dev. Biol.">
        <title>SEL1L deficiency impairs growth and differentiation of pancreatic epithelial cells.</title>
        <authorList>
            <person name="Li S."/>
            <person name="Francisco A.B."/>
            <person name="Munroe R.J."/>
            <person name="Schimenti J.C."/>
            <person name="Long Q."/>
        </authorList>
    </citation>
    <scope>FUNCTION</scope>
    <scope>DEVELOPMENTAL STAGE</scope>
    <scope>MISCELLANEOUS</scope>
</reference>
<reference key="4">
    <citation type="journal article" date="2010" name="Cell">
        <title>A tissue-specific atlas of mouse protein phosphorylation and expression.</title>
        <authorList>
            <person name="Huttlin E.L."/>
            <person name="Jedrychowski M.P."/>
            <person name="Elias J.E."/>
            <person name="Goswami T."/>
            <person name="Rad R."/>
            <person name="Beausoleil S.A."/>
            <person name="Villen J."/>
            <person name="Haas W."/>
            <person name="Sowa M.E."/>
            <person name="Gygi S.P."/>
        </authorList>
    </citation>
    <scope>IDENTIFICATION BY MASS SPECTROMETRY [LARGE SCALE ANALYSIS]</scope>
    <source>
        <tissue>Brain</tissue>
        <tissue>Brown adipose tissue</tissue>
        <tissue>Heart</tissue>
        <tissue>Kidney</tissue>
        <tissue>Liver</tissue>
        <tissue>Lung</tissue>
        <tissue>Pancreas</tissue>
        <tissue>Spleen</tissue>
        <tissue>Testis</tissue>
    </source>
</reference>
<reference key="5">
    <citation type="journal article" date="2014" name="Cell Metab.">
        <title>The ER-associated degradation adaptor protein Sel1L regulates LPL secretion and lipid metabolism.</title>
        <authorList>
            <person name="Sha H."/>
            <person name="Sun S."/>
            <person name="Francisco A.B."/>
            <person name="Ehrhardt N."/>
            <person name="Xue Z."/>
            <person name="Liu L."/>
            <person name="Lawrence P."/>
            <person name="Mattijssen F."/>
            <person name="Guber R.D."/>
            <person name="Panhwar M.S."/>
            <person name="Brenna J.T."/>
            <person name="Shi H."/>
            <person name="Xue B."/>
            <person name="Kersten S."/>
            <person name="Bensadoun A."/>
            <person name="Peterfy M."/>
            <person name="Long Q."/>
            <person name="Qi L."/>
        </authorList>
    </citation>
    <scope>DISRUPTION PHENOTYPE</scope>
    <scope>FUNCTION</scope>
    <scope>TISSUE SPECIFICITY</scope>
    <scope>GLYCOSYLATION</scope>
    <scope>INTERACTION WITH SYVN1; LPL AND LMF1</scope>
</reference>
<reference key="6">
    <citation type="journal article" date="2014" name="Proc. Natl. Acad. Sci. U.S.A.">
        <title>Sel1L is indispensable for mammalian endoplasmic reticulum-associated degradation, endoplasmic reticulum homeostasis, and survival.</title>
        <authorList>
            <person name="Sun S."/>
            <person name="Shi G."/>
            <person name="Han X."/>
            <person name="Francisco A.B."/>
            <person name="Ji Y."/>
            <person name="Mendonca N."/>
            <person name="Liu X."/>
            <person name="Locasale J.W."/>
            <person name="Simpson K.W."/>
            <person name="Duhamel G.E."/>
            <person name="Kersten S."/>
            <person name="Yates J.R. III"/>
            <person name="Long Q."/>
            <person name="Qi L."/>
        </authorList>
    </citation>
    <scope>DISRUPTION PHENOTYPE</scope>
    <scope>FUNCTION</scope>
    <scope>TISSUE SPECIFICITY</scope>
</reference>
<reference evidence="13" key="7">
    <citation type="journal article" date="2016" name="Sci. Rep.">
        <title>Crystal structure of SEL1L: Insight into the roles of SLR motifs in ERAD pathway.</title>
        <authorList>
            <person name="Jeong H."/>
            <person name="Sim H.J."/>
            <person name="Song E.K."/>
            <person name="Lee H."/>
            <person name="Ha S.C."/>
            <person name="Jun Y."/>
            <person name="Park T.J."/>
            <person name="Lee C."/>
        </authorList>
    </citation>
    <scope>X-RAY CRYSTALLOGRAPHY (2.60 ANGSTROMS) OF 348-533</scope>
    <scope>SUBUNIT</scope>
    <scope>INTERACTION WITH SYVN1</scope>
    <scope>REGION</scope>
    <scope>MUTAGENESIS OF 512-GLY-GLY-513; 515-ILE-LEU-516; TYR-519 AND LEU-521</scope>
</reference>
<feature type="signal peptide" evidence="3">
    <location>
        <begin position="1"/>
        <end position="21"/>
    </location>
</feature>
<feature type="chain" id="PRO_0000022296" description="Protein sel-1 homolog 1">
    <location>
        <begin position="22"/>
        <end position="790"/>
    </location>
</feature>
<feature type="topological domain" description="Lumenal" evidence="3">
    <location>
        <begin position="22"/>
        <end position="734"/>
    </location>
</feature>
<feature type="transmembrane region" description="Helical" evidence="3">
    <location>
        <begin position="735"/>
        <end position="755"/>
    </location>
</feature>
<feature type="topological domain" description="Cytoplasmic" evidence="3">
    <location>
        <begin position="756"/>
        <end position="790"/>
    </location>
</feature>
<feature type="domain" description="Fibronectin type-II" evidence="4">
    <location>
        <begin position="118"/>
        <end position="166"/>
    </location>
</feature>
<feature type="repeat" description="Sel1-like 1">
    <location>
        <begin position="179"/>
        <end position="214"/>
    </location>
</feature>
<feature type="repeat" description="Sel1-like 2">
    <location>
        <begin position="215"/>
        <end position="250"/>
    </location>
</feature>
<feature type="repeat" description="Sel1-like 3">
    <location>
        <begin position="251"/>
        <end position="286"/>
    </location>
</feature>
<feature type="repeat" description="Sel1-like 4">
    <location>
        <begin position="287"/>
        <end position="322"/>
    </location>
</feature>
<feature type="repeat" description="Sel1-like 5">
    <location>
        <begin position="369"/>
        <end position="405"/>
    </location>
</feature>
<feature type="repeat" description="Sel1-like 6">
    <location>
        <begin position="406"/>
        <end position="442"/>
    </location>
</feature>
<feature type="repeat" description="Sel1-like 7">
    <location>
        <begin position="443"/>
        <end position="478"/>
    </location>
</feature>
<feature type="repeat" description="Sel1-like 8">
    <location>
        <begin position="479"/>
        <end position="514"/>
    </location>
</feature>
<feature type="repeat" description="Sel1-like 9">
    <location>
        <begin position="515"/>
        <end position="550"/>
    </location>
</feature>
<feature type="repeat" description="Sel1-like 10">
    <location>
        <begin position="623"/>
        <end position="658"/>
    </location>
</feature>
<feature type="repeat" description="Sel1-like 11">
    <location>
        <begin position="660"/>
        <end position="695"/>
    </location>
</feature>
<feature type="region of interest" description="Disordered" evidence="5">
    <location>
        <begin position="22"/>
        <end position="51"/>
    </location>
</feature>
<feature type="region of interest" description="Interaction with ERLEC1, OS9 and SYVN1" evidence="1">
    <location>
        <begin position="23"/>
        <end position="733"/>
    </location>
</feature>
<feature type="region of interest" description="Disordered" evidence="5">
    <location>
        <begin position="67"/>
        <end position="98"/>
    </location>
</feature>
<feature type="region of interest" description="Important for homodimerization and oligomerization" evidence="9">
    <location>
        <begin position="348"/>
        <end position="533"/>
    </location>
</feature>
<feature type="region of interest" description="Interaction with SYVN1" evidence="9">
    <location>
        <begin position="639"/>
        <end position="719"/>
    </location>
</feature>
<feature type="region of interest" description="Mediates retention in the endoplasmic reticulum" evidence="1">
    <location>
        <begin position="734"/>
        <end position="790"/>
    </location>
</feature>
<feature type="region of interest" description="Disordered" evidence="5">
    <location>
        <begin position="763"/>
        <end position="790"/>
    </location>
</feature>
<feature type="compositionally biased region" description="Acidic residues" evidence="5">
    <location>
        <begin position="67"/>
        <end position="78"/>
    </location>
</feature>
<feature type="compositionally biased region" description="Pro residues" evidence="5">
    <location>
        <begin position="767"/>
        <end position="790"/>
    </location>
</feature>
<feature type="modified residue" description="Phosphoserine" evidence="2">
    <location>
        <position position="64"/>
    </location>
</feature>
<feature type="glycosylation site" description="N-linked (GlcNAc...) asparagine" evidence="3">
    <location>
        <position position="191"/>
    </location>
</feature>
<feature type="glycosylation site" description="N-linked (GlcNAc...) asparagine" evidence="3">
    <location>
        <position position="213"/>
    </location>
</feature>
<feature type="glycosylation site" description="N-linked (GlcNAc...) asparagine" evidence="3">
    <location>
        <position position="268"/>
    </location>
</feature>
<feature type="glycosylation site" description="N-linked (GlcNAc...) asparagine" evidence="3">
    <location>
        <position position="427"/>
    </location>
</feature>
<feature type="glycosylation site" description="N-linked (GlcNAc...) asparagine" evidence="3">
    <location>
        <position position="604"/>
    </location>
</feature>
<feature type="disulfide bond" evidence="4">
    <location>
        <begin position="123"/>
        <end position="149"/>
    </location>
</feature>
<feature type="disulfide bond" evidence="4">
    <location>
        <begin position="137"/>
        <end position="164"/>
    </location>
</feature>
<feature type="splice variant" id="VSP_004384" description="In isoform 2." evidence="11">
    <original>GTAHGEPCHFPFLFLDKEYDECTSDGREDGRLWCATTYDYKTDEKWGFCET</original>
    <variation>A</variation>
    <location>
        <begin position="116"/>
        <end position="166"/>
    </location>
</feature>
<feature type="mutagenesis site" description="Abolishes homodimerization." evidence="9">
    <original>GG</original>
    <variation>KK</variation>
    <location>
        <begin position="512"/>
        <end position="513"/>
    </location>
</feature>
<feature type="mutagenesis site" description="Abolishes homodimerization; when associated with A-519." evidence="9">
    <original>IL</original>
    <variation>AA</variation>
    <location>
        <begin position="515"/>
        <end position="516"/>
    </location>
</feature>
<feature type="mutagenesis site" description="Abolishes homodimerization; when associated with 515-A-A-516." evidence="9">
    <original>Y</original>
    <variation>A</variation>
    <location>
        <position position="519"/>
    </location>
</feature>
<feature type="mutagenesis site" description="Abolishes homodimerization." evidence="9">
    <original>L</original>
    <variation>A</variation>
    <location>
        <position position="521"/>
    </location>
</feature>
<feature type="helix" evidence="14">
    <location>
        <begin position="354"/>
        <end position="365"/>
    </location>
</feature>
<feature type="helix" evidence="14">
    <location>
        <begin position="369"/>
        <end position="381"/>
    </location>
</feature>
<feature type="helix" evidence="14">
    <location>
        <begin position="390"/>
        <end position="402"/>
    </location>
</feature>
<feature type="helix" evidence="14">
    <location>
        <begin position="406"/>
        <end position="417"/>
    </location>
</feature>
<feature type="strand" evidence="14">
    <location>
        <begin position="421"/>
        <end position="423"/>
    </location>
</feature>
<feature type="helix" evidence="14">
    <location>
        <begin position="427"/>
        <end position="439"/>
    </location>
</feature>
<feature type="helix" evidence="14">
    <location>
        <begin position="443"/>
        <end position="454"/>
    </location>
</feature>
<feature type="strand" evidence="14">
    <location>
        <begin position="457"/>
        <end position="459"/>
    </location>
</feature>
<feature type="helix" evidence="14">
    <location>
        <begin position="463"/>
        <end position="475"/>
    </location>
</feature>
<feature type="helix" evidence="14">
    <location>
        <begin position="479"/>
        <end position="490"/>
    </location>
</feature>
<feature type="strand" evidence="14">
    <location>
        <begin position="493"/>
        <end position="496"/>
    </location>
</feature>
<feature type="helix" evidence="14">
    <location>
        <begin position="499"/>
        <end position="510"/>
    </location>
</feature>
<feature type="helix" evidence="14">
    <location>
        <begin position="517"/>
        <end position="521"/>
    </location>
</feature>
<comment type="function">
    <text evidence="6 7 8">Plays a role in the endoplasmic reticulum quality control (ERQC) system also called ER-associated degradation (ERAD) involved in ubiquitin-dependent degradation of misfolded endoplasmic reticulum proteins (PubMed:24453213, PubMed:25066055). Enhances SYVN1 stability (PubMed:24453213). Plays a role in LPL maturation and secretion (PubMed:25066055). Required for normal differentiation of the pancreas epithelium, and for normal exocrine function and survival of pancreatic cells (PubMed:20170518, PubMed:24453213). May play a role in Notch signaling (PubMed:20170518).</text>
</comment>
<comment type="subunit">
    <text evidence="2 8 9">Homodimer and homooligomer (PubMed:27064360). May form a complex with ERLEC1, HSPA5, OS9, and SYVN1 (By similarity). Interacts with FOXRED2 and EDEM1 (By similarity). Interacts with LPL and LMF1; may stabilize the complex formed by LPL and LMF1 and thereby promote the export of LPL dimers (PubMed:25066055). Component of the HRD1 complex, which comprises at least SYNV1/HRD1, DERL1/2, FAM8A1, HERPUD1/HERP, OS9, SEL1L and UBE2J1 (By similarity). SYNV1 assembles with SEL1L and FAM8A1 through its transmembrane domains, but interaction with its cytoplasmic domain is required to confer stability to FAM8A1 and enhance recruitment of HERPUD1 (By similarity). The interaction with SYNV1/HRD1 is direct (PubMed:25066055, PubMed:27064360).</text>
</comment>
<comment type="subcellular location">
    <subcellularLocation>
        <location evidence="2">Endoplasmic reticulum membrane</location>
        <topology evidence="2">Single-pass type I membrane protein</topology>
    </subcellularLocation>
</comment>
<comment type="alternative products">
    <event type="alternative splicing"/>
    <isoform>
        <id>Q9Z2G6-1</id>
        <name>1</name>
        <sequence type="displayed"/>
    </isoform>
    <isoform>
        <id>Q9Z2G6-2</id>
        <name>2</name>
        <sequence type="described" ref="VSP_004384"/>
    </isoform>
</comment>
<comment type="tissue specificity">
    <text evidence="7 8 10">Highly expressed in pancreas, white adipose tissue, liver and spleen (at protein level) (PubMed:24453213, PubMed:25066055). Detected in heart, brain, spleen, lung, liver, kidney and testis (PubMed:9858735).</text>
</comment>
<comment type="developmental stage">
    <text evidence="6">First detected at 12.5 dpc in a small number of pancreas epithelial cells. Highly expressed in embryonic pancreas epithelium at later stages of embryonic development.</text>
</comment>
<comment type="PTM">
    <text evidence="8">N-glycosylated.</text>
</comment>
<comment type="disruption phenotype">
    <text evidence="7 8">Taxomifen-inducible gene disruption in adult mice leads to premature death within 3 weeks after the onset of taxomifen treatment. Mice progressively loose weight and become moribund despite increased food intake and normal blood glucose levels, suggesting nutrient maladsorption. After eight days of treatment, the pancreas was diffusely dark red and soft, suggesting severe pancreas atrophy. Still, the endocrine parts of the pancreas were not affected. Pancreas weight was about half of that of wild-type, the size of secretory zymogen granules was reduced and pancreatic lipase and alpha-amylase levels were strongly reduced. Besides, the morphology of the endoplasmic reticulum in pancreas acinar cells was abnormal, with swollen and fragmented cisternae. Likewise, SYVN1 protein levels are decreased, while those of other ERAD markers are increased (PubMed:24453213). Adipocyte-specific gene disruption does not give rise to any obvious phenotype when mice are kept on a low-fat diet. Mutant mice are resistant to diet-induced obesity when kept on a high-fat diet, in spite of normal food intake and physical activity. Mutant mice show dramatically reduced accumulation of fat mass relative to wild-type, while lean mass is not affected. Intriguingly, mutant mice display enlarged livers that develop steatosis and increased triglyceride levels. Mutant mice display increased fasting serum triglyceride and insulin levels. Likewise, mutant mice display hypertriglyceridemia after feeding, especially on a high-fat diet. In spite of increased cellular LPL levels, LPL secretion is reduced by 80 to 90% (PubMed:25066055).</text>
</comment>
<comment type="miscellaneous">
    <text evidence="6">Gene disruption after residue 465 and replacement of the C-terminus with a beta-galactosidase-neomycin reporter gene construct leads to complete embryonic lethality; most die before 13.5 dpc. Only 5% of the embryos are viable at 15.5 dpc. Mutant embryos display defects in the differentiation of the pancreas epithelium. The defects in pancreas differentiation can be alleviated by pharmacological inhibition of Notch signaling (in vitro).</text>
</comment>
<comment type="similarity">
    <text evidence="12">Belongs to the sel-1 family.</text>
</comment>
<sequence>MQVRVRLSLLLLCAVLLGSAAATSDDKTNQDDSLDSKSSLPTDESVKDHTTTGKVVAGQIFVDSEEAEVESLLQDEEDSSKTQEEEISFLESPNPSSKTYEELKRVRKPVLTAIEGTAHGEPCHFPFLFLDKEYDECTSDGREDGRLWCATTYDYKTDEKWGFCETEEDAAKRRQMQEAEMIYQAGMKILNGSNRKSQKREAYRYLQKAAGMNHTKALERVSYALLFGDYLTQNIQAAKEMFEKLTEEGSPKGQTGLGFLYASGLGVNSSQAKALVYYTFGALGGNLIAHMILGYRYWAGIGVLQSCESALTHYRLVANHVASDISLTGGSVVQRIRLPDEVENPGMNSGMLEEDLIQYYQFLAEKGDVQAQVGLGQLHLHGGRGVEQNHQRAFDYFNLAANAGNSHAMAFLGKMYSEGSDIVPQSNETALHYFKKAADMGNPVGQSGLGMAYLYGRGVQVNYDLALKYFQKAAEQGWVDGQLQLGSMYYNGIGVKRDYKQALKYFNLASQGGHILAFYNLAQMHASGTGVMRSCHTAVELFKNVCERGRWSERLMTAYNSYKDEDYNAAVVQYLLLAEQGYEVAQSNAAFILDQREATIVGENETYPRALLHWNRAASQGYTVARIKLGDYHFYGFGTDVDYETAFIHYRLASEQQHSAQAMFNLGYMHEKGLGIKQDIHLAKRFYDMAAEASPDAQVPVFLALCKLGVVYFLQYIREANIRDLFTQLDMDQLLGPEWDLYLMTIIALLLGTVIAYRQRQHQDIPVPRPPGPRPAPPQQEGPPEQQPPQ</sequence>
<name>SE1L1_MOUSE</name>
<accession>Q9Z2G6</accession>
<accession>Q9DBD8</accession>
<proteinExistence type="evidence at protein level"/>